<protein>
    <recommendedName>
        <fullName evidence="1">Elongation factor 4</fullName>
        <shortName evidence="1">EF-4</shortName>
        <ecNumber evidence="1">3.6.5.n1</ecNumber>
    </recommendedName>
    <alternativeName>
        <fullName evidence="1">Ribosomal back-translocase LepA</fullName>
    </alternativeName>
</protein>
<name>LEPA_PROA2</name>
<gene>
    <name evidence="1" type="primary">lepA</name>
    <name type="ordered locus">Paes_1569</name>
</gene>
<evidence type="ECO:0000255" key="1">
    <source>
        <dbReference type="HAMAP-Rule" id="MF_00071"/>
    </source>
</evidence>
<feature type="chain" id="PRO_1000092426" description="Elongation factor 4">
    <location>
        <begin position="1"/>
        <end position="604"/>
    </location>
</feature>
<feature type="domain" description="tr-type G">
    <location>
        <begin position="9"/>
        <end position="191"/>
    </location>
</feature>
<feature type="binding site" evidence="1">
    <location>
        <begin position="21"/>
        <end position="26"/>
    </location>
    <ligand>
        <name>GTP</name>
        <dbReference type="ChEBI" id="CHEBI:37565"/>
    </ligand>
</feature>
<feature type="binding site" evidence="1">
    <location>
        <begin position="138"/>
        <end position="141"/>
    </location>
    <ligand>
        <name>GTP</name>
        <dbReference type="ChEBI" id="CHEBI:37565"/>
    </ligand>
</feature>
<accession>B4S9B7</accession>
<proteinExistence type="inferred from homology"/>
<organism>
    <name type="scientific">Prosthecochloris aestuarii (strain DSM 271 / SK 413)</name>
    <dbReference type="NCBI Taxonomy" id="290512"/>
    <lineage>
        <taxon>Bacteria</taxon>
        <taxon>Pseudomonadati</taxon>
        <taxon>Chlorobiota</taxon>
        <taxon>Chlorobiia</taxon>
        <taxon>Chlorobiales</taxon>
        <taxon>Chlorobiaceae</taxon>
        <taxon>Prosthecochloris</taxon>
    </lineage>
</organism>
<dbReference type="EC" id="3.6.5.n1" evidence="1"/>
<dbReference type="EMBL" id="CP001108">
    <property type="protein sequence ID" value="ACF46587.1"/>
    <property type="molecule type" value="Genomic_DNA"/>
</dbReference>
<dbReference type="RefSeq" id="WP_012506120.1">
    <property type="nucleotide sequence ID" value="NC_011059.1"/>
</dbReference>
<dbReference type="SMR" id="B4S9B7"/>
<dbReference type="STRING" id="290512.Paes_1569"/>
<dbReference type="KEGG" id="paa:Paes_1569"/>
<dbReference type="eggNOG" id="COG0481">
    <property type="taxonomic scope" value="Bacteria"/>
</dbReference>
<dbReference type="HOGENOM" id="CLU_009995_3_3_10"/>
<dbReference type="Proteomes" id="UP000002725">
    <property type="component" value="Chromosome"/>
</dbReference>
<dbReference type="GO" id="GO:0005886">
    <property type="term" value="C:plasma membrane"/>
    <property type="evidence" value="ECO:0007669"/>
    <property type="project" value="UniProtKB-SubCell"/>
</dbReference>
<dbReference type="GO" id="GO:0005525">
    <property type="term" value="F:GTP binding"/>
    <property type="evidence" value="ECO:0007669"/>
    <property type="project" value="UniProtKB-UniRule"/>
</dbReference>
<dbReference type="GO" id="GO:0003924">
    <property type="term" value="F:GTPase activity"/>
    <property type="evidence" value="ECO:0007669"/>
    <property type="project" value="UniProtKB-UniRule"/>
</dbReference>
<dbReference type="GO" id="GO:0043022">
    <property type="term" value="F:ribosome binding"/>
    <property type="evidence" value="ECO:0007669"/>
    <property type="project" value="UniProtKB-UniRule"/>
</dbReference>
<dbReference type="GO" id="GO:0003746">
    <property type="term" value="F:translation elongation factor activity"/>
    <property type="evidence" value="ECO:0007669"/>
    <property type="project" value="UniProtKB-UniRule"/>
</dbReference>
<dbReference type="GO" id="GO:0045727">
    <property type="term" value="P:positive regulation of translation"/>
    <property type="evidence" value="ECO:0007669"/>
    <property type="project" value="UniProtKB-UniRule"/>
</dbReference>
<dbReference type="CDD" id="cd03699">
    <property type="entry name" value="EF4_II"/>
    <property type="match status" value="1"/>
</dbReference>
<dbReference type="CDD" id="cd16260">
    <property type="entry name" value="EF4_III"/>
    <property type="match status" value="1"/>
</dbReference>
<dbReference type="CDD" id="cd01890">
    <property type="entry name" value="LepA"/>
    <property type="match status" value="1"/>
</dbReference>
<dbReference type="CDD" id="cd03709">
    <property type="entry name" value="lepA_C"/>
    <property type="match status" value="1"/>
</dbReference>
<dbReference type="FunFam" id="3.40.50.300:FF:000078">
    <property type="entry name" value="Elongation factor 4"/>
    <property type="match status" value="1"/>
</dbReference>
<dbReference type="FunFam" id="2.40.30.10:FF:000015">
    <property type="entry name" value="Translation factor GUF1, mitochondrial"/>
    <property type="match status" value="1"/>
</dbReference>
<dbReference type="FunFam" id="3.30.70.240:FF:000007">
    <property type="entry name" value="Translation factor GUF1, mitochondrial"/>
    <property type="match status" value="1"/>
</dbReference>
<dbReference type="FunFam" id="3.30.70.2570:FF:000001">
    <property type="entry name" value="Translation factor GUF1, mitochondrial"/>
    <property type="match status" value="1"/>
</dbReference>
<dbReference type="FunFam" id="3.30.70.870:FF:000004">
    <property type="entry name" value="Translation factor GUF1, mitochondrial"/>
    <property type="match status" value="1"/>
</dbReference>
<dbReference type="Gene3D" id="3.30.70.240">
    <property type="match status" value="1"/>
</dbReference>
<dbReference type="Gene3D" id="3.30.70.2570">
    <property type="entry name" value="Elongation factor 4, C-terminal domain"/>
    <property type="match status" value="1"/>
</dbReference>
<dbReference type="Gene3D" id="3.30.70.870">
    <property type="entry name" value="Elongation Factor G (Translational Gtpase), domain 3"/>
    <property type="match status" value="1"/>
</dbReference>
<dbReference type="Gene3D" id="3.40.50.300">
    <property type="entry name" value="P-loop containing nucleotide triphosphate hydrolases"/>
    <property type="match status" value="1"/>
</dbReference>
<dbReference type="Gene3D" id="2.40.30.10">
    <property type="entry name" value="Translation factors"/>
    <property type="match status" value="1"/>
</dbReference>
<dbReference type="HAMAP" id="MF_00071">
    <property type="entry name" value="LepA"/>
    <property type="match status" value="1"/>
</dbReference>
<dbReference type="InterPro" id="IPR006297">
    <property type="entry name" value="EF-4"/>
</dbReference>
<dbReference type="InterPro" id="IPR035647">
    <property type="entry name" value="EFG_III/V"/>
</dbReference>
<dbReference type="InterPro" id="IPR000640">
    <property type="entry name" value="EFG_V-like"/>
</dbReference>
<dbReference type="InterPro" id="IPR004161">
    <property type="entry name" value="EFTu-like_2"/>
</dbReference>
<dbReference type="InterPro" id="IPR038363">
    <property type="entry name" value="LepA_C_sf"/>
</dbReference>
<dbReference type="InterPro" id="IPR013842">
    <property type="entry name" value="LepA_CTD"/>
</dbReference>
<dbReference type="InterPro" id="IPR035654">
    <property type="entry name" value="LepA_IV"/>
</dbReference>
<dbReference type="InterPro" id="IPR027417">
    <property type="entry name" value="P-loop_NTPase"/>
</dbReference>
<dbReference type="InterPro" id="IPR005225">
    <property type="entry name" value="Small_GTP-bd"/>
</dbReference>
<dbReference type="InterPro" id="IPR000795">
    <property type="entry name" value="T_Tr_GTP-bd_dom"/>
</dbReference>
<dbReference type="NCBIfam" id="TIGR01393">
    <property type="entry name" value="lepA"/>
    <property type="match status" value="1"/>
</dbReference>
<dbReference type="NCBIfam" id="TIGR00231">
    <property type="entry name" value="small_GTP"/>
    <property type="match status" value="1"/>
</dbReference>
<dbReference type="PANTHER" id="PTHR43512:SF4">
    <property type="entry name" value="TRANSLATION FACTOR GUF1 HOMOLOG, CHLOROPLASTIC"/>
    <property type="match status" value="1"/>
</dbReference>
<dbReference type="PANTHER" id="PTHR43512">
    <property type="entry name" value="TRANSLATION FACTOR GUF1-RELATED"/>
    <property type="match status" value="1"/>
</dbReference>
<dbReference type="Pfam" id="PF00679">
    <property type="entry name" value="EFG_C"/>
    <property type="match status" value="1"/>
</dbReference>
<dbReference type="Pfam" id="PF00009">
    <property type="entry name" value="GTP_EFTU"/>
    <property type="match status" value="1"/>
</dbReference>
<dbReference type="Pfam" id="PF03144">
    <property type="entry name" value="GTP_EFTU_D2"/>
    <property type="match status" value="1"/>
</dbReference>
<dbReference type="Pfam" id="PF06421">
    <property type="entry name" value="LepA_C"/>
    <property type="match status" value="1"/>
</dbReference>
<dbReference type="PRINTS" id="PR00315">
    <property type="entry name" value="ELONGATNFCT"/>
</dbReference>
<dbReference type="SUPFAM" id="SSF54980">
    <property type="entry name" value="EF-G C-terminal domain-like"/>
    <property type="match status" value="2"/>
</dbReference>
<dbReference type="SUPFAM" id="SSF52540">
    <property type="entry name" value="P-loop containing nucleoside triphosphate hydrolases"/>
    <property type="match status" value="1"/>
</dbReference>
<dbReference type="PROSITE" id="PS51722">
    <property type="entry name" value="G_TR_2"/>
    <property type="match status" value="1"/>
</dbReference>
<comment type="function">
    <text evidence="1">Required for accurate and efficient protein synthesis under certain stress conditions. May act as a fidelity factor of the translation reaction, by catalyzing a one-codon backward translocation of tRNAs on improperly translocated ribosomes. Back-translocation proceeds from a post-translocation (POST) complex to a pre-translocation (PRE) complex, thus giving elongation factor G a second chance to translocate the tRNAs correctly. Binds to ribosomes in a GTP-dependent manner.</text>
</comment>
<comment type="catalytic activity">
    <reaction evidence="1">
        <text>GTP + H2O = GDP + phosphate + H(+)</text>
        <dbReference type="Rhea" id="RHEA:19669"/>
        <dbReference type="ChEBI" id="CHEBI:15377"/>
        <dbReference type="ChEBI" id="CHEBI:15378"/>
        <dbReference type="ChEBI" id="CHEBI:37565"/>
        <dbReference type="ChEBI" id="CHEBI:43474"/>
        <dbReference type="ChEBI" id="CHEBI:58189"/>
        <dbReference type="EC" id="3.6.5.n1"/>
    </reaction>
</comment>
<comment type="subcellular location">
    <subcellularLocation>
        <location evidence="1">Cell inner membrane</location>
        <topology evidence="1">Peripheral membrane protein</topology>
        <orientation evidence="1">Cytoplasmic side</orientation>
    </subcellularLocation>
</comment>
<comment type="similarity">
    <text evidence="1">Belongs to the TRAFAC class translation factor GTPase superfamily. Classic translation factor GTPase family. LepA subfamily.</text>
</comment>
<sequence length="604" mass="67316">MPSSSTDVDAIRNFCIIAHIDHGKSTLADRLLEVTGTLQHNQMTAQVLDDMDLERERGITIKSHAIQMHHKAGDGRAYILNLIDTPGHVDFSYEVSRSLAACEGALLVVDATQGVEAQTIANLYLAVEAGLEIIPVINKIDLPSADVEGVAQQIIDLIGVDREEIVEVSAKAGIGIDSLLDAVISRVPAPADHRSMPLRALIFDSVFDAYRGAVVYLRIVDGVLRKGDRVRFFANDKIFVADEIGTMGLKRQPNTVLEAGNVGYLICSIKDVKDAKVGDTVTLADNSAKERLSGYKDVKPMVFSGLYPVDSDEFEDLRESLEKLSLNDASLVYTPETSAALGFGFRCGFLGLLHMEIIQERLEREYKVNIITTVPNVEYRVLRTNGETILVDNPSKMPEAGLISEVEEPYVRIQIITMADYIGNVMKLSMERRGEYKNTDYLDTLRVNLHFEFPLAEIVFDFHDKLKSVSKGYASMDYEYIGYRRSDLVKLDVLLNGEPVDALSTVVHRSKAYEWGRKLCQKLKTIIPKQMYEVAIQAAIGSRVISRETISAIRKNVLAKCYGGDISRKRKLLEKQKEGKKRMKQVGRVEVPQEAFLAVLNIDE</sequence>
<keyword id="KW-0997">Cell inner membrane</keyword>
<keyword id="KW-1003">Cell membrane</keyword>
<keyword id="KW-0342">GTP-binding</keyword>
<keyword id="KW-0378">Hydrolase</keyword>
<keyword id="KW-0472">Membrane</keyword>
<keyword id="KW-0547">Nucleotide-binding</keyword>
<keyword id="KW-0648">Protein biosynthesis</keyword>
<reference key="1">
    <citation type="submission" date="2008-06" db="EMBL/GenBank/DDBJ databases">
        <title>Complete sequence of chromosome of Prosthecochloris aestuarii DSM 271.</title>
        <authorList>
            <consortium name="US DOE Joint Genome Institute"/>
            <person name="Lucas S."/>
            <person name="Copeland A."/>
            <person name="Lapidus A."/>
            <person name="Glavina del Rio T."/>
            <person name="Dalin E."/>
            <person name="Tice H."/>
            <person name="Bruce D."/>
            <person name="Goodwin L."/>
            <person name="Pitluck S."/>
            <person name="Schmutz J."/>
            <person name="Larimer F."/>
            <person name="Land M."/>
            <person name="Hauser L."/>
            <person name="Kyrpides N."/>
            <person name="Anderson I."/>
            <person name="Liu Z."/>
            <person name="Li T."/>
            <person name="Zhao F."/>
            <person name="Overmann J."/>
            <person name="Bryant D.A."/>
            <person name="Richardson P."/>
        </authorList>
    </citation>
    <scope>NUCLEOTIDE SEQUENCE [LARGE SCALE GENOMIC DNA]</scope>
    <source>
        <strain>DSM 271 / SK 413</strain>
    </source>
</reference>